<organism>
    <name type="scientific">Salmonella paratyphi A (strain ATCC 9150 / SARB42)</name>
    <dbReference type="NCBI Taxonomy" id="295319"/>
    <lineage>
        <taxon>Bacteria</taxon>
        <taxon>Pseudomonadati</taxon>
        <taxon>Pseudomonadota</taxon>
        <taxon>Gammaproteobacteria</taxon>
        <taxon>Enterobacterales</taxon>
        <taxon>Enterobacteriaceae</taxon>
        <taxon>Salmonella</taxon>
    </lineage>
</organism>
<comment type="function">
    <text evidence="1">Catalyzes the synthesis of activated sulfate.</text>
</comment>
<comment type="catalytic activity">
    <reaction evidence="1">
        <text>adenosine 5'-phosphosulfate + ATP = 3'-phosphoadenylyl sulfate + ADP + H(+)</text>
        <dbReference type="Rhea" id="RHEA:24152"/>
        <dbReference type="ChEBI" id="CHEBI:15378"/>
        <dbReference type="ChEBI" id="CHEBI:30616"/>
        <dbReference type="ChEBI" id="CHEBI:58243"/>
        <dbReference type="ChEBI" id="CHEBI:58339"/>
        <dbReference type="ChEBI" id="CHEBI:456216"/>
        <dbReference type="EC" id="2.7.1.25"/>
    </reaction>
</comment>
<comment type="pathway">
    <text evidence="1">Sulfur metabolism; hydrogen sulfide biosynthesis; sulfite from sulfate: step 2/3.</text>
</comment>
<comment type="similarity">
    <text evidence="1">Belongs to the APS kinase family.</text>
</comment>
<protein>
    <recommendedName>
        <fullName evidence="1">Adenylyl-sulfate kinase</fullName>
        <ecNumber evidence="1">2.7.1.25</ecNumber>
    </recommendedName>
    <alternativeName>
        <fullName evidence="1">APS kinase</fullName>
    </alternativeName>
    <alternativeName>
        <fullName evidence="1">ATP adenosine-5'-phosphosulfate 3'-phosphotransferase</fullName>
    </alternativeName>
    <alternativeName>
        <fullName evidence="1">Adenosine-5'-phosphosulfate kinase</fullName>
    </alternativeName>
</protein>
<name>CYSC_SALPA</name>
<feature type="chain" id="PRO_1000009020" description="Adenylyl-sulfate kinase">
    <location>
        <begin position="1"/>
        <end position="201"/>
    </location>
</feature>
<feature type="active site" description="Phosphoserine intermediate" evidence="1">
    <location>
        <position position="109"/>
    </location>
</feature>
<feature type="binding site" evidence="1">
    <location>
        <begin position="35"/>
        <end position="42"/>
    </location>
    <ligand>
        <name>ATP</name>
        <dbReference type="ChEBI" id="CHEBI:30616"/>
    </ligand>
</feature>
<accession>Q5PEH3</accession>
<keyword id="KW-0067">ATP-binding</keyword>
<keyword id="KW-0418">Kinase</keyword>
<keyword id="KW-0547">Nucleotide-binding</keyword>
<keyword id="KW-0597">Phosphoprotein</keyword>
<keyword id="KW-0808">Transferase</keyword>
<dbReference type="EC" id="2.7.1.25" evidence="1"/>
<dbReference type="EMBL" id="CP000026">
    <property type="protein sequence ID" value="AAV78644.1"/>
    <property type="molecule type" value="Genomic_DNA"/>
</dbReference>
<dbReference type="RefSeq" id="WP_001173658.1">
    <property type="nucleotide sequence ID" value="NC_006511.1"/>
</dbReference>
<dbReference type="SMR" id="Q5PEH3"/>
<dbReference type="KEGG" id="spt:SPA2789"/>
<dbReference type="HOGENOM" id="CLU_046932_1_0_6"/>
<dbReference type="UniPathway" id="UPA00140">
    <property type="reaction ID" value="UER00205"/>
</dbReference>
<dbReference type="Proteomes" id="UP000008185">
    <property type="component" value="Chromosome"/>
</dbReference>
<dbReference type="GO" id="GO:0004020">
    <property type="term" value="F:adenylylsulfate kinase activity"/>
    <property type="evidence" value="ECO:0007669"/>
    <property type="project" value="UniProtKB-UniRule"/>
</dbReference>
<dbReference type="GO" id="GO:0005524">
    <property type="term" value="F:ATP binding"/>
    <property type="evidence" value="ECO:0007669"/>
    <property type="project" value="UniProtKB-UniRule"/>
</dbReference>
<dbReference type="GO" id="GO:0070814">
    <property type="term" value="P:hydrogen sulfide biosynthetic process"/>
    <property type="evidence" value="ECO:0007669"/>
    <property type="project" value="UniProtKB-UniRule"/>
</dbReference>
<dbReference type="GO" id="GO:0000103">
    <property type="term" value="P:sulfate assimilation"/>
    <property type="evidence" value="ECO:0007669"/>
    <property type="project" value="UniProtKB-UniRule"/>
</dbReference>
<dbReference type="CDD" id="cd02027">
    <property type="entry name" value="APSK"/>
    <property type="match status" value="1"/>
</dbReference>
<dbReference type="FunFam" id="3.40.50.300:FF:000212">
    <property type="entry name" value="Adenylyl-sulfate kinase"/>
    <property type="match status" value="1"/>
</dbReference>
<dbReference type="Gene3D" id="3.40.50.300">
    <property type="entry name" value="P-loop containing nucleotide triphosphate hydrolases"/>
    <property type="match status" value="1"/>
</dbReference>
<dbReference type="HAMAP" id="MF_00065">
    <property type="entry name" value="Adenylyl_sulf_kinase"/>
    <property type="match status" value="1"/>
</dbReference>
<dbReference type="InterPro" id="IPR002891">
    <property type="entry name" value="APS_kinase"/>
</dbReference>
<dbReference type="InterPro" id="IPR027417">
    <property type="entry name" value="P-loop_NTPase"/>
</dbReference>
<dbReference type="NCBIfam" id="TIGR00455">
    <property type="entry name" value="apsK"/>
    <property type="match status" value="1"/>
</dbReference>
<dbReference type="NCBIfam" id="NF003013">
    <property type="entry name" value="PRK03846.1"/>
    <property type="match status" value="1"/>
</dbReference>
<dbReference type="PANTHER" id="PTHR11055:SF63">
    <property type="entry name" value="ADENYLYL-SULFATE KINASE 1, CHLOROPLASTIC"/>
    <property type="match status" value="1"/>
</dbReference>
<dbReference type="PANTHER" id="PTHR11055">
    <property type="entry name" value="BIFUNCTIONAL 3'-PHOSPHOADENOSINE 5'-PHOSPHOSULFATE SYNTHASE"/>
    <property type="match status" value="1"/>
</dbReference>
<dbReference type="Pfam" id="PF01583">
    <property type="entry name" value="APS_kinase"/>
    <property type="match status" value="1"/>
</dbReference>
<dbReference type="SUPFAM" id="SSF52540">
    <property type="entry name" value="P-loop containing nucleoside triphosphate hydrolases"/>
    <property type="match status" value="1"/>
</dbReference>
<sequence length="201" mass="22417">MALHDENVVWHSHPVTVAAREQLHGHRGVMLWFTGLSGSGKSTVAGALEEALHQRGVSTYLLDGDNVRHGLCRDLGFSDADRQENIRRVGEVASLMADAGLIVLTAFISPHRAERQLVKERVGHDRFIEIYVNTPLAICEQRDPKGLYKKARAGELRNFTGIDAIYEAPDSPQVHLNGEQLVTNLVSQLLDLLRRRDIIRS</sequence>
<proteinExistence type="inferred from homology"/>
<evidence type="ECO:0000255" key="1">
    <source>
        <dbReference type="HAMAP-Rule" id="MF_00065"/>
    </source>
</evidence>
<gene>
    <name evidence="1" type="primary">cysC</name>
    <name type="ordered locus">SPA2789</name>
</gene>
<reference key="1">
    <citation type="journal article" date="2004" name="Nat. Genet.">
        <title>Comparison of genome degradation in Paratyphi A and Typhi, human-restricted serovars of Salmonella enterica that cause typhoid.</title>
        <authorList>
            <person name="McClelland M."/>
            <person name="Sanderson K.E."/>
            <person name="Clifton S.W."/>
            <person name="Latreille P."/>
            <person name="Porwollik S."/>
            <person name="Sabo A."/>
            <person name="Meyer R."/>
            <person name="Bieri T."/>
            <person name="Ozersky P."/>
            <person name="McLellan M."/>
            <person name="Harkins C.R."/>
            <person name="Wang C."/>
            <person name="Nguyen C."/>
            <person name="Berghoff A."/>
            <person name="Elliott G."/>
            <person name="Kohlberg S."/>
            <person name="Strong C."/>
            <person name="Du F."/>
            <person name="Carter J."/>
            <person name="Kremizki C."/>
            <person name="Layman D."/>
            <person name="Leonard S."/>
            <person name="Sun H."/>
            <person name="Fulton L."/>
            <person name="Nash W."/>
            <person name="Miner T."/>
            <person name="Minx P."/>
            <person name="Delehaunty K."/>
            <person name="Fronick C."/>
            <person name="Magrini V."/>
            <person name="Nhan M."/>
            <person name="Warren W."/>
            <person name="Florea L."/>
            <person name="Spieth J."/>
            <person name="Wilson R.K."/>
        </authorList>
    </citation>
    <scope>NUCLEOTIDE SEQUENCE [LARGE SCALE GENOMIC DNA]</scope>
    <source>
        <strain>ATCC 9150 / SARB42</strain>
    </source>
</reference>